<protein>
    <recommendedName>
        <fullName evidence="1">Small ribosomal subunit protein bS20</fullName>
    </recommendedName>
    <alternativeName>
        <fullName evidence="2">30S ribosomal protein S20</fullName>
    </alternativeName>
</protein>
<reference key="1">
    <citation type="journal article" date="2010" name="Genome Biol.">
        <title>Structure and dynamics of the pan-genome of Streptococcus pneumoniae and closely related species.</title>
        <authorList>
            <person name="Donati C."/>
            <person name="Hiller N.L."/>
            <person name="Tettelin H."/>
            <person name="Muzzi A."/>
            <person name="Croucher N.J."/>
            <person name="Angiuoli S.V."/>
            <person name="Oggioni M."/>
            <person name="Dunning Hotopp J.C."/>
            <person name="Hu F.Z."/>
            <person name="Riley D.R."/>
            <person name="Covacci A."/>
            <person name="Mitchell T.J."/>
            <person name="Bentley S.D."/>
            <person name="Kilian M."/>
            <person name="Ehrlich G.D."/>
            <person name="Rappuoli R."/>
            <person name="Moxon E.R."/>
            <person name="Masignani V."/>
        </authorList>
    </citation>
    <scope>NUCLEOTIDE SEQUENCE [LARGE SCALE GENOMIC DNA]</scope>
    <source>
        <strain>Taiwan19F-14</strain>
    </source>
</reference>
<proteinExistence type="inferred from homology"/>
<evidence type="ECO:0000255" key="1">
    <source>
        <dbReference type="HAMAP-Rule" id="MF_00500"/>
    </source>
</evidence>
<evidence type="ECO:0000305" key="2"/>
<dbReference type="EMBL" id="CP000921">
    <property type="protein sequence ID" value="ACO23013.1"/>
    <property type="molecule type" value="Genomic_DNA"/>
</dbReference>
<dbReference type="RefSeq" id="WP_001274003.1">
    <property type="nucleotide sequence ID" value="NC_012469.1"/>
</dbReference>
<dbReference type="SMR" id="C1CS53"/>
<dbReference type="KEGG" id="snt:SPT_1365"/>
<dbReference type="HOGENOM" id="CLU_160655_1_1_9"/>
<dbReference type="GO" id="GO:0005829">
    <property type="term" value="C:cytosol"/>
    <property type="evidence" value="ECO:0007669"/>
    <property type="project" value="TreeGrafter"/>
</dbReference>
<dbReference type="GO" id="GO:0015935">
    <property type="term" value="C:small ribosomal subunit"/>
    <property type="evidence" value="ECO:0007669"/>
    <property type="project" value="TreeGrafter"/>
</dbReference>
<dbReference type="GO" id="GO:0070181">
    <property type="term" value="F:small ribosomal subunit rRNA binding"/>
    <property type="evidence" value="ECO:0007669"/>
    <property type="project" value="TreeGrafter"/>
</dbReference>
<dbReference type="GO" id="GO:0003735">
    <property type="term" value="F:structural constituent of ribosome"/>
    <property type="evidence" value="ECO:0007669"/>
    <property type="project" value="InterPro"/>
</dbReference>
<dbReference type="GO" id="GO:0006412">
    <property type="term" value="P:translation"/>
    <property type="evidence" value="ECO:0007669"/>
    <property type="project" value="UniProtKB-UniRule"/>
</dbReference>
<dbReference type="FunFam" id="1.20.58.110:FF:000001">
    <property type="entry name" value="30S ribosomal protein S20"/>
    <property type="match status" value="1"/>
</dbReference>
<dbReference type="Gene3D" id="1.20.58.110">
    <property type="entry name" value="Ribosomal protein S20"/>
    <property type="match status" value="1"/>
</dbReference>
<dbReference type="HAMAP" id="MF_00500">
    <property type="entry name" value="Ribosomal_bS20"/>
    <property type="match status" value="1"/>
</dbReference>
<dbReference type="InterPro" id="IPR002583">
    <property type="entry name" value="Ribosomal_bS20"/>
</dbReference>
<dbReference type="InterPro" id="IPR036510">
    <property type="entry name" value="Ribosomal_bS20_sf"/>
</dbReference>
<dbReference type="NCBIfam" id="TIGR00029">
    <property type="entry name" value="S20"/>
    <property type="match status" value="1"/>
</dbReference>
<dbReference type="PANTHER" id="PTHR33398">
    <property type="entry name" value="30S RIBOSOMAL PROTEIN S20"/>
    <property type="match status" value="1"/>
</dbReference>
<dbReference type="PANTHER" id="PTHR33398:SF1">
    <property type="entry name" value="SMALL RIBOSOMAL SUBUNIT PROTEIN BS20C"/>
    <property type="match status" value="1"/>
</dbReference>
<dbReference type="Pfam" id="PF01649">
    <property type="entry name" value="Ribosomal_S20p"/>
    <property type="match status" value="1"/>
</dbReference>
<dbReference type="SUPFAM" id="SSF46992">
    <property type="entry name" value="Ribosomal protein S20"/>
    <property type="match status" value="1"/>
</dbReference>
<feature type="chain" id="PRO_1000194269" description="Small ribosomal subunit protein bS20">
    <location>
        <begin position="1"/>
        <end position="78"/>
    </location>
</feature>
<sequence>MANIKSAIKRAELNVKQNEKNSAQKSAMRTAIKAFEANPSEELFRAASSAIDKAETKGLIHKNKASRDKARLSTKLAK</sequence>
<keyword id="KW-0687">Ribonucleoprotein</keyword>
<keyword id="KW-0689">Ribosomal protein</keyword>
<keyword id="KW-0694">RNA-binding</keyword>
<keyword id="KW-0699">rRNA-binding</keyword>
<name>RS20_STRZT</name>
<comment type="function">
    <text evidence="1">Binds directly to 16S ribosomal RNA.</text>
</comment>
<comment type="similarity">
    <text evidence="1">Belongs to the bacterial ribosomal protein bS20 family.</text>
</comment>
<gene>
    <name evidence="1" type="primary">rpsT</name>
    <name type="ordered locus">SPT_1365</name>
</gene>
<organism>
    <name type="scientific">Streptococcus pneumoniae (strain Taiwan19F-14)</name>
    <dbReference type="NCBI Taxonomy" id="487213"/>
    <lineage>
        <taxon>Bacteria</taxon>
        <taxon>Bacillati</taxon>
        <taxon>Bacillota</taxon>
        <taxon>Bacilli</taxon>
        <taxon>Lactobacillales</taxon>
        <taxon>Streptococcaceae</taxon>
        <taxon>Streptococcus</taxon>
    </lineage>
</organism>
<accession>C1CS53</accession>